<accession>Q9CY73</accession>
<accession>Q3U0J0</accession>
<accession>Q8VE61</accession>
<feature type="transit peptide" description="Mitochondrion" evidence="1">
    <location>
        <begin position="1"/>
        <end position="30"/>
    </location>
</feature>
<feature type="chain" id="PRO_0000030822" description="Large ribosomal subunit protein mL44">
    <location>
        <begin position="31"/>
        <end position="333"/>
    </location>
</feature>
<feature type="domain" description="RNase III">
    <location>
        <begin position="86"/>
        <end position="228"/>
    </location>
</feature>
<feature type="domain" description="DRBM" evidence="3">
    <location>
        <begin position="236"/>
        <end position="306"/>
    </location>
</feature>
<feature type="region of interest" description="Disordered" evidence="4">
    <location>
        <begin position="311"/>
        <end position="333"/>
    </location>
</feature>
<feature type="compositionally biased region" description="Basic and acidic residues" evidence="4">
    <location>
        <begin position="311"/>
        <end position="327"/>
    </location>
</feature>
<feature type="splice variant" id="VSP_014126" description="In isoform 2." evidence="5">
    <original>DFLI</original>
    <variation>VGNG</variation>
    <location>
        <begin position="217"/>
        <end position="220"/>
    </location>
</feature>
<feature type="splice variant" id="VSP_014127" description="In isoform 2." evidence="5">
    <location>
        <begin position="221"/>
        <end position="333"/>
    </location>
</feature>
<feature type="sequence conflict" description="In Ref. 3; AAH19727." evidence="6" ref="3">
    <original>T</original>
    <variation>P</variation>
    <location>
        <position position="233"/>
    </location>
</feature>
<feature type="sequence conflict" description="In Ref. 3; AAH19727." evidence="6" ref="3">
    <original>N</original>
    <variation>D</variation>
    <location>
        <position position="249"/>
    </location>
</feature>
<dbReference type="EC" id="3.1.26.-"/>
<dbReference type="EMBL" id="AK019986">
    <property type="protein sequence ID" value="BAB31953.1"/>
    <property type="molecule type" value="mRNA"/>
</dbReference>
<dbReference type="EMBL" id="AK156814">
    <property type="protein sequence ID" value="BAE33863.1"/>
    <property type="molecule type" value="mRNA"/>
</dbReference>
<dbReference type="EMBL" id="CH466687">
    <property type="protein sequence ID" value="EDL16270.1"/>
    <property type="molecule type" value="Genomic_DNA"/>
</dbReference>
<dbReference type="EMBL" id="BC019727">
    <property type="protein sequence ID" value="AAH19727.1"/>
    <property type="molecule type" value="mRNA"/>
</dbReference>
<dbReference type="CCDS" id="CCDS35629.1">
    <molecule id="Q9CY73-1"/>
</dbReference>
<dbReference type="RefSeq" id="NP_001074679.1">
    <molecule id="Q9CY73-1"/>
    <property type="nucleotide sequence ID" value="NM_001081210.1"/>
</dbReference>
<dbReference type="SMR" id="Q9CY73"/>
<dbReference type="BioGRID" id="213264">
    <property type="interactions" value="3"/>
</dbReference>
<dbReference type="ComplexPortal" id="CPX-5302">
    <property type="entry name" value="39S mitochondrial large ribosomal subunit"/>
</dbReference>
<dbReference type="FunCoup" id="Q9CY73">
    <property type="interactions" value="2023"/>
</dbReference>
<dbReference type="STRING" id="10090.ENSMUSP00000027464"/>
<dbReference type="iPTMnet" id="Q9CY73"/>
<dbReference type="PhosphoSitePlus" id="Q9CY73"/>
<dbReference type="SwissPalm" id="Q9CY73"/>
<dbReference type="PaxDb" id="10090-ENSMUSP00000027464"/>
<dbReference type="PeptideAtlas" id="Q9CY73"/>
<dbReference type="ProteomicsDB" id="299862">
    <molecule id="Q9CY73-1"/>
</dbReference>
<dbReference type="ProteomicsDB" id="299863">
    <molecule id="Q9CY73-2"/>
</dbReference>
<dbReference type="Pumba" id="Q9CY73"/>
<dbReference type="Antibodypedia" id="34365">
    <property type="antibodies" value="156 antibodies from 23 providers"/>
</dbReference>
<dbReference type="Ensembl" id="ENSMUST00000027464.9">
    <molecule id="Q9CY73-1"/>
    <property type="protein sequence ID" value="ENSMUSP00000027464.9"/>
    <property type="gene ID" value="ENSMUSG00000026248.10"/>
</dbReference>
<dbReference type="GeneID" id="69163"/>
<dbReference type="KEGG" id="mmu:69163"/>
<dbReference type="UCSC" id="uc007bqx.1">
    <molecule id="Q9CY73-2"/>
    <property type="organism name" value="mouse"/>
</dbReference>
<dbReference type="UCSC" id="uc007bqy.1">
    <molecule id="Q9CY73-1"/>
    <property type="organism name" value="mouse"/>
</dbReference>
<dbReference type="AGR" id="MGI:1916413"/>
<dbReference type="CTD" id="65080"/>
<dbReference type="MGI" id="MGI:1916413">
    <property type="gene designation" value="Mrpl44"/>
</dbReference>
<dbReference type="VEuPathDB" id="HostDB:ENSMUSG00000026248"/>
<dbReference type="eggNOG" id="KOG3769">
    <property type="taxonomic scope" value="Eukaryota"/>
</dbReference>
<dbReference type="GeneTree" id="ENSGT00390000016956"/>
<dbReference type="HOGENOM" id="CLU_058895_0_0_1"/>
<dbReference type="InParanoid" id="Q9CY73"/>
<dbReference type="OMA" id="RHIKRWV"/>
<dbReference type="OrthoDB" id="444135at2759"/>
<dbReference type="PhylomeDB" id="Q9CY73"/>
<dbReference type="TreeFam" id="TF324185"/>
<dbReference type="Reactome" id="R-MMU-5389840">
    <property type="pathway name" value="Mitochondrial translation elongation"/>
</dbReference>
<dbReference type="Reactome" id="R-MMU-5419276">
    <property type="pathway name" value="Mitochondrial translation termination"/>
</dbReference>
<dbReference type="BioGRID-ORCS" id="69163">
    <property type="hits" value="23 hits in 80 CRISPR screens"/>
</dbReference>
<dbReference type="PRO" id="PR:Q9CY73"/>
<dbReference type="Proteomes" id="UP000000589">
    <property type="component" value="Chromosome 1"/>
</dbReference>
<dbReference type="RNAct" id="Q9CY73">
    <property type="molecule type" value="protein"/>
</dbReference>
<dbReference type="Bgee" id="ENSMUSG00000026248">
    <property type="expression patterns" value="Expressed in paneth cell and 268 other cell types or tissues"/>
</dbReference>
<dbReference type="GO" id="GO:0005743">
    <property type="term" value="C:mitochondrial inner membrane"/>
    <property type="evidence" value="ECO:0000303"/>
    <property type="project" value="ComplexPortal"/>
</dbReference>
<dbReference type="GO" id="GO:0005762">
    <property type="term" value="C:mitochondrial large ribosomal subunit"/>
    <property type="evidence" value="ECO:0000250"/>
    <property type="project" value="UniProtKB"/>
</dbReference>
<dbReference type="GO" id="GO:0016604">
    <property type="term" value="C:nuclear body"/>
    <property type="evidence" value="ECO:0007669"/>
    <property type="project" value="Ensembl"/>
</dbReference>
<dbReference type="GO" id="GO:0005886">
    <property type="term" value="C:plasma membrane"/>
    <property type="evidence" value="ECO:0007669"/>
    <property type="project" value="Ensembl"/>
</dbReference>
<dbReference type="GO" id="GO:0003725">
    <property type="term" value="F:double-stranded RNA binding"/>
    <property type="evidence" value="ECO:0007669"/>
    <property type="project" value="InterPro"/>
</dbReference>
<dbReference type="GO" id="GO:0004525">
    <property type="term" value="F:ribonuclease III activity"/>
    <property type="evidence" value="ECO:0007669"/>
    <property type="project" value="InterPro"/>
</dbReference>
<dbReference type="GO" id="GO:0032543">
    <property type="term" value="P:mitochondrial translation"/>
    <property type="evidence" value="ECO:0000303"/>
    <property type="project" value="ComplexPortal"/>
</dbReference>
<dbReference type="GO" id="GO:0070125">
    <property type="term" value="P:mitochondrial translational elongation"/>
    <property type="evidence" value="ECO:0000250"/>
    <property type="project" value="UniProtKB"/>
</dbReference>
<dbReference type="GO" id="GO:0006396">
    <property type="term" value="P:RNA processing"/>
    <property type="evidence" value="ECO:0007669"/>
    <property type="project" value="InterPro"/>
</dbReference>
<dbReference type="CDD" id="cd19874">
    <property type="entry name" value="DSRM_MRPL44"/>
    <property type="match status" value="1"/>
</dbReference>
<dbReference type="FunFam" id="1.10.1520.10:FF:000010">
    <property type="entry name" value="39S ribosomal protein L44, mitochondrial"/>
    <property type="match status" value="1"/>
</dbReference>
<dbReference type="FunFam" id="3.30.160.20:FF:000037">
    <property type="entry name" value="39S ribosomal protein L44, mitochondrial"/>
    <property type="match status" value="1"/>
</dbReference>
<dbReference type="Gene3D" id="3.30.160.20">
    <property type="match status" value="1"/>
</dbReference>
<dbReference type="Gene3D" id="1.10.1520.10">
    <property type="entry name" value="Ribonuclease III domain"/>
    <property type="match status" value="1"/>
</dbReference>
<dbReference type="InterPro" id="IPR014720">
    <property type="entry name" value="dsRBD_dom"/>
</dbReference>
<dbReference type="InterPro" id="IPR044444">
    <property type="entry name" value="Ribosomal_mL44_DSRM_metazoa"/>
</dbReference>
<dbReference type="InterPro" id="IPR055189">
    <property type="entry name" value="RM44_endonuclase"/>
</dbReference>
<dbReference type="InterPro" id="IPR036389">
    <property type="entry name" value="RNase_III_sf"/>
</dbReference>
<dbReference type="PANTHER" id="PTHR11207:SF5">
    <property type="entry name" value="LARGE RIBOSOMAL SUBUNIT PROTEIN ML44"/>
    <property type="match status" value="1"/>
</dbReference>
<dbReference type="PANTHER" id="PTHR11207">
    <property type="entry name" value="RIBONUCLEASE III"/>
    <property type="match status" value="1"/>
</dbReference>
<dbReference type="Pfam" id="PF22892">
    <property type="entry name" value="DSRM_MRPL44"/>
    <property type="match status" value="1"/>
</dbReference>
<dbReference type="Pfam" id="PF22935">
    <property type="entry name" value="RM44_endonuclase"/>
    <property type="match status" value="1"/>
</dbReference>
<dbReference type="SUPFAM" id="SSF54768">
    <property type="entry name" value="dsRNA-binding domain-like"/>
    <property type="match status" value="1"/>
</dbReference>
<dbReference type="SUPFAM" id="SSF69065">
    <property type="entry name" value="RNase III domain-like"/>
    <property type="match status" value="1"/>
</dbReference>
<dbReference type="PROSITE" id="PS50137">
    <property type="entry name" value="DS_RBD"/>
    <property type="match status" value="1"/>
</dbReference>
<sequence length="333" mass="37527">MASAVFRLLQQGPRRLLAPAVPTLAPPVRGVKKGFRAAFRFQKELERWRLLRCPPPPVRRSEKPNWDYHAEVQAFGSRLQETFSLDLLKTAFINSCYIKSEEAKRQSLGIEKEAALLNLKDNQELFEQGLSFSHRCLTQFLEDEFPDLPAEGTESLVSFLTGEAVVCHVARNLAVEQLTLSAEFPVPLPVLRQTFFAVIGALLQSSGPERAALFIRDFLITQMTGKELFEMWTVVNPMGLLVEELKKRNISAPESRLTRQSGSTTALPLYFVGLYCDRKLIAEGPGETVLVAEEEAARVALRKLYGFTENRRPWDYSKPKESPKRAEQTSVAS</sequence>
<reference key="1">
    <citation type="journal article" date="2005" name="Science">
        <title>The transcriptional landscape of the mammalian genome.</title>
        <authorList>
            <person name="Carninci P."/>
            <person name="Kasukawa T."/>
            <person name="Katayama S."/>
            <person name="Gough J."/>
            <person name="Frith M.C."/>
            <person name="Maeda N."/>
            <person name="Oyama R."/>
            <person name="Ravasi T."/>
            <person name="Lenhard B."/>
            <person name="Wells C."/>
            <person name="Kodzius R."/>
            <person name="Shimokawa K."/>
            <person name="Bajic V.B."/>
            <person name="Brenner S.E."/>
            <person name="Batalov S."/>
            <person name="Forrest A.R."/>
            <person name="Zavolan M."/>
            <person name="Davis M.J."/>
            <person name="Wilming L.G."/>
            <person name="Aidinis V."/>
            <person name="Allen J.E."/>
            <person name="Ambesi-Impiombato A."/>
            <person name="Apweiler R."/>
            <person name="Aturaliya R.N."/>
            <person name="Bailey T.L."/>
            <person name="Bansal M."/>
            <person name="Baxter L."/>
            <person name="Beisel K.W."/>
            <person name="Bersano T."/>
            <person name="Bono H."/>
            <person name="Chalk A.M."/>
            <person name="Chiu K.P."/>
            <person name="Choudhary V."/>
            <person name="Christoffels A."/>
            <person name="Clutterbuck D.R."/>
            <person name="Crowe M.L."/>
            <person name="Dalla E."/>
            <person name="Dalrymple B.P."/>
            <person name="de Bono B."/>
            <person name="Della Gatta G."/>
            <person name="di Bernardo D."/>
            <person name="Down T."/>
            <person name="Engstrom P."/>
            <person name="Fagiolini M."/>
            <person name="Faulkner G."/>
            <person name="Fletcher C.F."/>
            <person name="Fukushima T."/>
            <person name="Furuno M."/>
            <person name="Futaki S."/>
            <person name="Gariboldi M."/>
            <person name="Georgii-Hemming P."/>
            <person name="Gingeras T.R."/>
            <person name="Gojobori T."/>
            <person name="Green R.E."/>
            <person name="Gustincich S."/>
            <person name="Harbers M."/>
            <person name="Hayashi Y."/>
            <person name="Hensch T.K."/>
            <person name="Hirokawa N."/>
            <person name="Hill D."/>
            <person name="Huminiecki L."/>
            <person name="Iacono M."/>
            <person name="Ikeo K."/>
            <person name="Iwama A."/>
            <person name="Ishikawa T."/>
            <person name="Jakt M."/>
            <person name="Kanapin A."/>
            <person name="Katoh M."/>
            <person name="Kawasawa Y."/>
            <person name="Kelso J."/>
            <person name="Kitamura H."/>
            <person name="Kitano H."/>
            <person name="Kollias G."/>
            <person name="Krishnan S.P."/>
            <person name="Kruger A."/>
            <person name="Kummerfeld S.K."/>
            <person name="Kurochkin I.V."/>
            <person name="Lareau L.F."/>
            <person name="Lazarevic D."/>
            <person name="Lipovich L."/>
            <person name="Liu J."/>
            <person name="Liuni S."/>
            <person name="McWilliam S."/>
            <person name="Madan Babu M."/>
            <person name="Madera M."/>
            <person name="Marchionni L."/>
            <person name="Matsuda H."/>
            <person name="Matsuzawa S."/>
            <person name="Miki H."/>
            <person name="Mignone F."/>
            <person name="Miyake S."/>
            <person name="Morris K."/>
            <person name="Mottagui-Tabar S."/>
            <person name="Mulder N."/>
            <person name="Nakano N."/>
            <person name="Nakauchi H."/>
            <person name="Ng P."/>
            <person name="Nilsson R."/>
            <person name="Nishiguchi S."/>
            <person name="Nishikawa S."/>
            <person name="Nori F."/>
            <person name="Ohara O."/>
            <person name="Okazaki Y."/>
            <person name="Orlando V."/>
            <person name="Pang K.C."/>
            <person name="Pavan W.J."/>
            <person name="Pavesi G."/>
            <person name="Pesole G."/>
            <person name="Petrovsky N."/>
            <person name="Piazza S."/>
            <person name="Reed J."/>
            <person name="Reid J.F."/>
            <person name="Ring B.Z."/>
            <person name="Ringwald M."/>
            <person name="Rost B."/>
            <person name="Ruan Y."/>
            <person name="Salzberg S.L."/>
            <person name="Sandelin A."/>
            <person name="Schneider C."/>
            <person name="Schoenbach C."/>
            <person name="Sekiguchi K."/>
            <person name="Semple C.A."/>
            <person name="Seno S."/>
            <person name="Sessa L."/>
            <person name="Sheng Y."/>
            <person name="Shibata Y."/>
            <person name="Shimada H."/>
            <person name="Shimada K."/>
            <person name="Silva D."/>
            <person name="Sinclair B."/>
            <person name="Sperling S."/>
            <person name="Stupka E."/>
            <person name="Sugiura K."/>
            <person name="Sultana R."/>
            <person name="Takenaka Y."/>
            <person name="Taki K."/>
            <person name="Tammoja K."/>
            <person name="Tan S.L."/>
            <person name="Tang S."/>
            <person name="Taylor M.S."/>
            <person name="Tegner J."/>
            <person name="Teichmann S.A."/>
            <person name="Ueda H.R."/>
            <person name="van Nimwegen E."/>
            <person name="Verardo R."/>
            <person name="Wei C.L."/>
            <person name="Yagi K."/>
            <person name="Yamanishi H."/>
            <person name="Zabarovsky E."/>
            <person name="Zhu S."/>
            <person name="Zimmer A."/>
            <person name="Hide W."/>
            <person name="Bult C."/>
            <person name="Grimmond S.M."/>
            <person name="Teasdale R.D."/>
            <person name="Liu E.T."/>
            <person name="Brusic V."/>
            <person name="Quackenbush J."/>
            <person name="Wahlestedt C."/>
            <person name="Mattick J.S."/>
            <person name="Hume D.A."/>
            <person name="Kai C."/>
            <person name="Sasaki D."/>
            <person name="Tomaru Y."/>
            <person name="Fukuda S."/>
            <person name="Kanamori-Katayama M."/>
            <person name="Suzuki M."/>
            <person name="Aoki J."/>
            <person name="Arakawa T."/>
            <person name="Iida J."/>
            <person name="Imamura K."/>
            <person name="Itoh M."/>
            <person name="Kato T."/>
            <person name="Kawaji H."/>
            <person name="Kawagashira N."/>
            <person name="Kawashima T."/>
            <person name="Kojima M."/>
            <person name="Kondo S."/>
            <person name="Konno H."/>
            <person name="Nakano K."/>
            <person name="Ninomiya N."/>
            <person name="Nishio T."/>
            <person name="Okada M."/>
            <person name="Plessy C."/>
            <person name="Shibata K."/>
            <person name="Shiraki T."/>
            <person name="Suzuki S."/>
            <person name="Tagami M."/>
            <person name="Waki K."/>
            <person name="Watahiki A."/>
            <person name="Okamura-Oho Y."/>
            <person name="Suzuki H."/>
            <person name="Kawai J."/>
            <person name="Hayashizaki Y."/>
        </authorList>
    </citation>
    <scope>NUCLEOTIDE SEQUENCE [LARGE SCALE MRNA] (ISOFORM 2)</scope>
    <source>
        <strain>C57BL/6J</strain>
        <strain>NOD</strain>
        <tissue>Spleen</tissue>
    </source>
</reference>
<reference key="2">
    <citation type="submission" date="2005-07" db="EMBL/GenBank/DDBJ databases">
        <authorList>
            <person name="Mural R.J."/>
            <person name="Adams M.D."/>
            <person name="Myers E.W."/>
            <person name="Smith H.O."/>
            <person name="Venter J.C."/>
        </authorList>
    </citation>
    <scope>NUCLEOTIDE SEQUENCE [LARGE SCALE GENOMIC DNA]</scope>
</reference>
<reference key="3">
    <citation type="journal article" date="2004" name="Genome Res.">
        <title>The status, quality, and expansion of the NIH full-length cDNA project: the Mammalian Gene Collection (MGC).</title>
        <authorList>
            <consortium name="The MGC Project Team"/>
        </authorList>
    </citation>
    <scope>NUCLEOTIDE SEQUENCE [LARGE SCALE MRNA] OF 219-333</scope>
    <source>
        <strain>Czech II</strain>
        <tissue>Mammary gland</tissue>
    </source>
</reference>
<reference key="4">
    <citation type="journal article" date="2010" name="Cell">
        <title>A tissue-specific atlas of mouse protein phosphorylation and expression.</title>
        <authorList>
            <person name="Huttlin E.L."/>
            <person name="Jedrychowski M.P."/>
            <person name="Elias J.E."/>
            <person name="Goswami T."/>
            <person name="Rad R."/>
            <person name="Beausoleil S.A."/>
            <person name="Villen J."/>
            <person name="Haas W."/>
            <person name="Sowa M.E."/>
            <person name="Gygi S.P."/>
        </authorList>
    </citation>
    <scope>IDENTIFICATION BY MASS SPECTROMETRY [LARGE SCALE ANALYSIS]</scope>
    <source>
        <tissue>Brain</tissue>
        <tissue>Brown adipose tissue</tissue>
        <tissue>Heart</tissue>
        <tissue>Kidney</tissue>
        <tissue>Liver</tissue>
        <tissue>Testis</tissue>
    </source>
</reference>
<name>RM44_MOUSE</name>
<organism>
    <name type="scientific">Mus musculus</name>
    <name type="common">Mouse</name>
    <dbReference type="NCBI Taxonomy" id="10090"/>
    <lineage>
        <taxon>Eukaryota</taxon>
        <taxon>Metazoa</taxon>
        <taxon>Chordata</taxon>
        <taxon>Craniata</taxon>
        <taxon>Vertebrata</taxon>
        <taxon>Euteleostomi</taxon>
        <taxon>Mammalia</taxon>
        <taxon>Eutheria</taxon>
        <taxon>Euarchontoglires</taxon>
        <taxon>Glires</taxon>
        <taxon>Rodentia</taxon>
        <taxon>Myomorpha</taxon>
        <taxon>Muroidea</taxon>
        <taxon>Muridae</taxon>
        <taxon>Murinae</taxon>
        <taxon>Mus</taxon>
        <taxon>Mus</taxon>
    </lineage>
</organism>
<comment type="function">
    <text evidence="2">Component of the 39S subunit of mitochondrial ribosome. May have a function in the assembly/stability of nascent mitochondrial polypeptides exiting the ribosome.</text>
</comment>
<comment type="subunit">
    <text evidence="2">Component of the mitochondrial ribosome large subunit (39S) which comprises a 16S rRNA and about 50 distinct proteins.</text>
</comment>
<comment type="subcellular location">
    <subcellularLocation>
        <location evidence="2">Mitochondrion</location>
    </subcellularLocation>
</comment>
<comment type="alternative products">
    <event type="alternative splicing"/>
    <isoform>
        <id>Q9CY73-1</id>
        <name>1</name>
        <sequence type="displayed"/>
    </isoform>
    <isoform>
        <id>Q9CY73-2</id>
        <name>2</name>
        <sequence type="described" ref="VSP_014126 VSP_014127"/>
    </isoform>
</comment>
<comment type="similarity">
    <text evidence="6">Belongs to the ribonuclease III family. Mitochondrion-specific ribosomal protein mL44 subfamily.</text>
</comment>
<keyword id="KW-0025">Alternative splicing</keyword>
<keyword id="KW-0255">Endonuclease</keyword>
<keyword id="KW-0378">Hydrolase</keyword>
<keyword id="KW-0496">Mitochondrion</keyword>
<keyword id="KW-0540">Nuclease</keyword>
<keyword id="KW-1185">Reference proteome</keyword>
<keyword id="KW-0687">Ribonucleoprotein</keyword>
<keyword id="KW-0689">Ribosomal protein</keyword>
<keyword id="KW-0694">RNA-binding</keyword>
<keyword id="KW-0809">Transit peptide</keyword>
<gene>
    <name type="primary">Mrpl44</name>
</gene>
<evidence type="ECO:0000250" key="1"/>
<evidence type="ECO:0000250" key="2">
    <source>
        <dbReference type="UniProtKB" id="Q9H9J2"/>
    </source>
</evidence>
<evidence type="ECO:0000255" key="3">
    <source>
        <dbReference type="PROSITE-ProRule" id="PRU00266"/>
    </source>
</evidence>
<evidence type="ECO:0000256" key="4">
    <source>
        <dbReference type="SAM" id="MobiDB-lite"/>
    </source>
</evidence>
<evidence type="ECO:0000303" key="5">
    <source>
    </source>
</evidence>
<evidence type="ECO:0000305" key="6"/>
<proteinExistence type="evidence at protein level"/>
<protein>
    <recommendedName>
        <fullName evidence="6">Large ribosomal subunit protein mL44</fullName>
        <ecNumber>3.1.26.-</ecNumber>
    </recommendedName>
    <alternativeName>
        <fullName>39S ribosomal protein L44, mitochondrial</fullName>
        <shortName>L44mt</shortName>
        <shortName>MRP-L44</shortName>
    </alternativeName>
</protein>